<feature type="chain" id="PRO_1000019107" description="Molybdenum cofactor guanylyltransferase">
    <location>
        <begin position="1"/>
        <end position="221"/>
    </location>
</feature>
<feature type="binding site" evidence="1">
    <location>
        <begin position="18"/>
        <end position="20"/>
    </location>
    <ligand>
        <name>GTP</name>
        <dbReference type="ChEBI" id="CHEBI:37565"/>
    </ligand>
</feature>
<feature type="binding site" evidence="1">
    <location>
        <position position="35"/>
    </location>
    <ligand>
        <name>GTP</name>
        <dbReference type="ChEBI" id="CHEBI:37565"/>
    </ligand>
</feature>
<feature type="binding site" evidence="1">
    <location>
        <position position="63"/>
    </location>
    <ligand>
        <name>GTP</name>
        <dbReference type="ChEBI" id="CHEBI:37565"/>
    </ligand>
</feature>
<feature type="binding site" evidence="1">
    <location>
        <position position="81"/>
    </location>
    <ligand>
        <name>GTP</name>
        <dbReference type="ChEBI" id="CHEBI:37565"/>
    </ligand>
</feature>
<feature type="binding site" evidence="1">
    <location>
        <position position="112"/>
    </location>
    <ligand>
        <name>GTP</name>
        <dbReference type="ChEBI" id="CHEBI:37565"/>
    </ligand>
</feature>
<feature type="binding site" evidence="1">
    <location>
        <position position="112"/>
    </location>
    <ligand>
        <name>Mg(2+)</name>
        <dbReference type="ChEBI" id="CHEBI:18420"/>
    </ligand>
</feature>
<name>MOBA_BRUO2</name>
<sequence>MRAGQPKITGAKITGAIIAGGQSSRMQAGGVSGDKFLQPLGSAPVIAHVIARLQPQVDTLFINSKGDLSRFAAFGLPAVKDIAMNHGGPLVGLLTCLAHASPCRLLLTSAADTPFLPCDLASNLIRKQAETGARIILACSNERVHPIVGLWHTDLVPDLEKWLQHAEKASIFWFAKHIGFEVVNIPLAHAPRLAESYDPFFNINLPDDLLKAREINEALQA</sequence>
<dbReference type="EC" id="2.7.7.77" evidence="1"/>
<dbReference type="EMBL" id="CP000708">
    <property type="protein sequence ID" value="ABQ60433.1"/>
    <property type="molecule type" value="Genomic_DNA"/>
</dbReference>
<dbReference type="RefSeq" id="WP_002964077.1">
    <property type="nucleotide sequence ID" value="NC_009505.1"/>
</dbReference>
<dbReference type="SMR" id="A5VQC8"/>
<dbReference type="KEGG" id="bov:BOV_0947"/>
<dbReference type="HOGENOM" id="CLU_055597_5_0_5"/>
<dbReference type="Proteomes" id="UP000006383">
    <property type="component" value="Chromosome I"/>
</dbReference>
<dbReference type="GO" id="GO:0005737">
    <property type="term" value="C:cytoplasm"/>
    <property type="evidence" value="ECO:0007669"/>
    <property type="project" value="UniProtKB-SubCell"/>
</dbReference>
<dbReference type="GO" id="GO:0005525">
    <property type="term" value="F:GTP binding"/>
    <property type="evidence" value="ECO:0007669"/>
    <property type="project" value="UniProtKB-UniRule"/>
</dbReference>
<dbReference type="GO" id="GO:0046872">
    <property type="term" value="F:metal ion binding"/>
    <property type="evidence" value="ECO:0007669"/>
    <property type="project" value="UniProtKB-KW"/>
</dbReference>
<dbReference type="GO" id="GO:0061603">
    <property type="term" value="F:molybdenum cofactor guanylyltransferase activity"/>
    <property type="evidence" value="ECO:0007669"/>
    <property type="project" value="UniProtKB-EC"/>
</dbReference>
<dbReference type="GO" id="GO:1902758">
    <property type="term" value="P:bis(molybdopterin guanine dinucleotide)molybdenum biosynthetic process"/>
    <property type="evidence" value="ECO:0007669"/>
    <property type="project" value="TreeGrafter"/>
</dbReference>
<dbReference type="CDD" id="cd02503">
    <property type="entry name" value="MobA"/>
    <property type="match status" value="1"/>
</dbReference>
<dbReference type="Gene3D" id="3.90.550.10">
    <property type="entry name" value="Spore Coat Polysaccharide Biosynthesis Protein SpsA, Chain A"/>
    <property type="match status" value="1"/>
</dbReference>
<dbReference type="HAMAP" id="MF_00316">
    <property type="entry name" value="MobA"/>
    <property type="match status" value="1"/>
</dbReference>
<dbReference type="InterPro" id="IPR025877">
    <property type="entry name" value="MobA-like_NTP_Trfase"/>
</dbReference>
<dbReference type="InterPro" id="IPR013482">
    <property type="entry name" value="Molybde_CF_guanTrfase"/>
</dbReference>
<dbReference type="InterPro" id="IPR029044">
    <property type="entry name" value="Nucleotide-diphossugar_trans"/>
</dbReference>
<dbReference type="PANTHER" id="PTHR19136">
    <property type="entry name" value="MOLYBDENUM COFACTOR GUANYLYLTRANSFERASE"/>
    <property type="match status" value="1"/>
</dbReference>
<dbReference type="PANTHER" id="PTHR19136:SF81">
    <property type="entry name" value="MOLYBDENUM COFACTOR GUANYLYLTRANSFERASE"/>
    <property type="match status" value="1"/>
</dbReference>
<dbReference type="Pfam" id="PF12804">
    <property type="entry name" value="NTP_transf_3"/>
    <property type="match status" value="1"/>
</dbReference>
<dbReference type="SUPFAM" id="SSF53448">
    <property type="entry name" value="Nucleotide-diphospho-sugar transferases"/>
    <property type="match status" value="1"/>
</dbReference>
<protein>
    <recommendedName>
        <fullName evidence="1">Molybdenum cofactor guanylyltransferase</fullName>
        <shortName evidence="1">MoCo guanylyltransferase</shortName>
        <ecNumber evidence="1">2.7.7.77</ecNumber>
    </recommendedName>
    <alternativeName>
        <fullName evidence="1">GTP:molybdopterin guanylyltransferase</fullName>
    </alternativeName>
    <alternativeName>
        <fullName evidence="1">Mo-MPT guanylyltransferase</fullName>
    </alternativeName>
    <alternativeName>
        <fullName evidence="1">Molybdopterin guanylyltransferase</fullName>
    </alternativeName>
    <alternativeName>
        <fullName evidence="1">Molybdopterin-guanine dinucleotide synthase</fullName>
        <shortName evidence="1">MGD synthase</shortName>
    </alternativeName>
</protein>
<reference key="1">
    <citation type="journal article" date="2009" name="PLoS ONE">
        <title>Genome degradation in Brucella ovis corresponds with narrowing of its host range and tissue tropism.</title>
        <authorList>
            <person name="Tsolis R.M."/>
            <person name="Seshadri R."/>
            <person name="Santos R.L."/>
            <person name="Sangari F.J."/>
            <person name="Lobo J.M."/>
            <person name="de Jong M.F."/>
            <person name="Ren Q."/>
            <person name="Myers G."/>
            <person name="Brinkac L.M."/>
            <person name="Nelson W.C."/>
            <person name="Deboy R.T."/>
            <person name="Angiuoli S."/>
            <person name="Khouri H."/>
            <person name="Dimitrov G."/>
            <person name="Robinson J.R."/>
            <person name="Mulligan S."/>
            <person name="Walker R.L."/>
            <person name="Elzer P.E."/>
            <person name="Hassan K.A."/>
            <person name="Paulsen I.T."/>
        </authorList>
    </citation>
    <scope>NUCLEOTIDE SEQUENCE [LARGE SCALE GENOMIC DNA]</scope>
    <source>
        <strain>ATCC 25840 / 63/290 / NCTC 10512</strain>
    </source>
</reference>
<accession>A5VQC8</accession>
<keyword id="KW-0963">Cytoplasm</keyword>
<keyword id="KW-0342">GTP-binding</keyword>
<keyword id="KW-0460">Magnesium</keyword>
<keyword id="KW-0479">Metal-binding</keyword>
<keyword id="KW-0501">Molybdenum cofactor biosynthesis</keyword>
<keyword id="KW-0547">Nucleotide-binding</keyword>
<keyword id="KW-0808">Transferase</keyword>
<evidence type="ECO:0000255" key="1">
    <source>
        <dbReference type="HAMAP-Rule" id="MF_00316"/>
    </source>
</evidence>
<organism>
    <name type="scientific">Brucella ovis (strain ATCC 25840 / 63/290 / NCTC 10512)</name>
    <dbReference type="NCBI Taxonomy" id="444178"/>
    <lineage>
        <taxon>Bacteria</taxon>
        <taxon>Pseudomonadati</taxon>
        <taxon>Pseudomonadota</taxon>
        <taxon>Alphaproteobacteria</taxon>
        <taxon>Hyphomicrobiales</taxon>
        <taxon>Brucellaceae</taxon>
        <taxon>Brucella/Ochrobactrum group</taxon>
        <taxon>Brucella</taxon>
    </lineage>
</organism>
<comment type="function">
    <text evidence="1">Transfers a GMP moiety from GTP to Mo-molybdopterin (Mo-MPT) cofactor (Moco or molybdenum cofactor) to form Mo-molybdopterin guanine dinucleotide (Mo-MGD) cofactor.</text>
</comment>
<comment type="catalytic activity">
    <reaction evidence="1">
        <text>Mo-molybdopterin + GTP + H(+) = Mo-molybdopterin guanine dinucleotide + diphosphate</text>
        <dbReference type="Rhea" id="RHEA:34243"/>
        <dbReference type="ChEBI" id="CHEBI:15378"/>
        <dbReference type="ChEBI" id="CHEBI:33019"/>
        <dbReference type="ChEBI" id="CHEBI:37565"/>
        <dbReference type="ChEBI" id="CHEBI:71302"/>
        <dbReference type="ChEBI" id="CHEBI:71310"/>
        <dbReference type="EC" id="2.7.7.77"/>
    </reaction>
</comment>
<comment type="cofactor">
    <cofactor evidence="1">
        <name>Mg(2+)</name>
        <dbReference type="ChEBI" id="CHEBI:18420"/>
    </cofactor>
</comment>
<comment type="subunit">
    <text evidence="1">Monomer.</text>
</comment>
<comment type="subcellular location">
    <subcellularLocation>
        <location evidence="1">Cytoplasm</location>
    </subcellularLocation>
</comment>
<comment type="domain">
    <text evidence="1">The N-terminal domain determines nucleotide recognition and specific binding, while the C-terminal domain determines the specific binding to the target protein.</text>
</comment>
<comment type="similarity">
    <text evidence="1">Belongs to the MobA family.</text>
</comment>
<proteinExistence type="inferred from homology"/>
<gene>
    <name evidence="1" type="primary">mobA</name>
    <name type="ordered locus">BOV_0947</name>
</gene>